<protein>
    <recommendedName>
        <fullName evidence="1">Acetylglutamate kinase</fullName>
        <ecNumber evidence="1">2.7.2.8</ecNumber>
    </recommendedName>
    <alternativeName>
        <fullName evidence="1">N-acetyl-L-glutamate 5-phosphotransferase</fullName>
    </alternativeName>
    <alternativeName>
        <fullName evidence="1">NAG kinase</fullName>
        <shortName evidence="1">NAGK</shortName>
    </alternativeName>
</protein>
<proteinExistence type="inferred from homology"/>
<keyword id="KW-0028">Amino-acid biosynthesis</keyword>
<keyword id="KW-0055">Arginine biosynthesis</keyword>
<keyword id="KW-0067">ATP-binding</keyword>
<keyword id="KW-0963">Cytoplasm</keyword>
<keyword id="KW-0418">Kinase</keyword>
<keyword id="KW-0547">Nucleotide-binding</keyword>
<keyword id="KW-0808">Transferase</keyword>
<accession>Q731G5</accession>
<evidence type="ECO:0000255" key="1">
    <source>
        <dbReference type="HAMAP-Rule" id="MF_00082"/>
    </source>
</evidence>
<comment type="function">
    <text evidence="1">Catalyzes the ATP-dependent phosphorylation of N-acetyl-L-glutamate.</text>
</comment>
<comment type="catalytic activity">
    <reaction evidence="1">
        <text>N-acetyl-L-glutamate + ATP = N-acetyl-L-glutamyl 5-phosphate + ADP</text>
        <dbReference type="Rhea" id="RHEA:14629"/>
        <dbReference type="ChEBI" id="CHEBI:30616"/>
        <dbReference type="ChEBI" id="CHEBI:44337"/>
        <dbReference type="ChEBI" id="CHEBI:57936"/>
        <dbReference type="ChEBI" id="CHEBI:456216"/>
        <dbReference type="EC" id="2.7.2.8"/>
    </reaction>
</comment>
<comment type="pathway">
    <text evidence="1">Amino-acid biosynthesis; L-arginine biosynthesis; N(2)-acetyl-L-ornithine from L-glutamate: step 2/4.</text>
</comment>
<comment type="subcellular location">
    <subcellularLocation>
        <location evidence="1">Cytoplasm</location>
    </subcellularLocation>
</comment>
<comment type="similarity">
    <text evidence="1">Belongs to the acetylglutamate kinase family. ArgB subfamily.</text>
</comment>
<organism>
    <name type="scientific">Bacillus cereus (strain ATCC 10987 / NRS 248)</name>
    <dbReference type="NCBI Taxonomy" id="222523"/>
    <lineage>
        <taxon>Bacteria</taxon>
        <taxon>Bacillati</taxon>
        <taxon>Bacillota</taxon>
        <taxon>Bacilli</taxon>
        <taxon>Bacillales</taxon>
        <taxon>Bacillaceae</taxon>
        <taxon>Bacillus</taxon>
        <taxon>Bacillus cereus group</taxon>
    </lineage>
</organism>
<gene>
    <name evidence="1" type="primary">argB</name>
    <name type="ordered locus">BCE_4201</name>
</gene>
<sequence>MSDYIVVKCGGSMLDQLHDVFFDCIKKLQQKYKVVIVHGGGPEIDAKLKDCNINVEKKDGLRVTPKEVMDIVQMVLCGSTNKKLVMNLQKHNLRAVGCSGCDGKLLQVQPVSEEIGYVGEVRYVETALLKGLINMNYIPVIAPVGINDNEIYNINADTAAAGIAAALSAKELIFITDVDGVLHEGKLLKKTDEFEIVNLIEKGVITGGMIPKVQAALASLKMGVQKVSIVNGTKDFTEVTGECIGTTVTRGVSIA</sequence>
<feature type="chain" id="PRO_0000112578" description="Acetylglutamate kinase">
    <location>
        <begin position="1"/>
        <end position="255"/>
    </location>
</feature>
<feature type="binding site" evidence="1">
    <location>
        <begin position="40"/>
        <end position="41"/>
    </location>
    <ligand>
        <name>substrate</name>
    </ligand>
</feature>
<feature type="binding site" evidence="1">
    <location>
        <position position="62"/>
    </location>
    <ligand>
        <name>substrate</name>
    </ligand>
</feature>
<feature type="binding site" evidence="1">
    <location>
        <position position="153"/>
    </location>
    <ligand>
        <name>substrate</name>
    </ligand>
</feature>
<feature type="site" description="Transition state stabilizer" evidence="1">
    <location>
        <position position="8"/>
    </location>
</feature>
<feature type="site" description="Transition state stabilizer" evidence="1">
    <location>
        <position position="212"/>
    </location>
</feature>
<name>ARGB_BACC1</name>
<reference key="1">
    <citation type="journal article" date="2004" name="Nucleic Acids Res.">
        <title>The genome sequence of Bacillus cereus ATCC 10987 reveals metabolic adaptations and a large plasmid related to Bacillus anthracis pXO1.</title>
        <authorList>
            <person name="Rasko D.A."/>
            <person name="Ravel J."/>
            <person name="Oekstad O.A."/>
            <person name="Helgason E."/>
            <person name="Cer R.Z."/>
            <person name="Jiang L."/>
            <person name="Shores K.A."/>
            <person name="Fouts D.E."/>
            <person name="Tourasse N.J."/>
            <person name="Angiuoli S.V."/>
            <person name="Kolonay J.F."/>
            <person name="Nelson W.C."/>
            <person name="Kolstoe A.-B."/>
            <person name="Fraser C.M."/>
            <person name="Read T.D."/>
        </authorList>
    </citation>
    <scope>NUCLEOTIDE SEQUENCE [LARGE SCALE GENOMIC DNA]</scope>
    <source>
        <strain>ATCC 10987 / NRS 248</strain>
    </source>
</reference>
<dbReference type="EC" id="2.7.2.8" evidence="1"/>
<dbReference type="EMBL" id="AE017194">
    <property type="protein sequence ID" value="AAS43102.1"/>
    <property type="molecule type" value="Genomic_DNA"/>
</dbReference>
<dbReference type="SMR" id="Q731G5"/>
<dbReference type="KEGG" id="bca:BCE_4201"/>
<dbReference type="HOGENOM" id="CLU_053680_1_0_9"/>
<dbReference type="UniPathway" id="UPA00068">
    <property type="reaction ID" value="UER00107"/>
</dbReference>
<dbReference type="Proteomes" id="UP000002527">
    <property type="component" value="Chromosome"/>
</dbReference>
<dbReference type="GO" id="GO:0005737">
    <property type="term" value="C:cytoplasm"/>
    <property type="evidence" value="ECO:0007669"/>
    <property type="project" value="UniProtKB-SubCell"/>
</dbReference>
<dbReference type="GO" id="GO:0003991">
    <property type="term" value="F:acetylglutamate kinase activity"/>
    <property type="evidence" value="ECO:0007669"/>
    <property type="project" value="UniProtKB-UniRule"/>
</dbReference>
<dbReference type="GO" id="GO:0005524">
    <property type="term" value="F:ATP binding"/>
    <property type="evidence" value="ECO:0007669"/>
    <property type="project" value="UniProtKB-UniRule"/>
</dbReference>
<dbReference type="GO" id="GO:0042450">
    <property type="term" value="P:arginine biosynthetic process via ornithine"/>
    <property type="evidence" value="ECO:0007669"/>
    <property type="project" value="UniProtKB-UniRule"/>
</dbReference>
<dbReference type="GO" id="GO:0006526">
    <property type="term" value="P:L-arginine biosynthetic process"/>
    <property type="evidence" value="ECO:0007669"/>
    <property type="project" value="UniProtKB-UniPathway"/>
</dbReference>
<dbReference type="CDD" id="cd04238">
    <property type="entry name" value="AAK_NAGK-like"/>
    <property type="match status" value="1"/>
</dbReference>
<dbReference type="FunFam" id="3.40.1160.10:FF:000034">
    <property type="entry name" value="Acetylglutamate kinase"/>
    <property type="match status" value="1"/>
</dbReference>
<dbReference type="Gene3D" id="3.40.1160.10">
    <property type="entry name" value="Acetylglutamate kinase-like"/>
    <property type="match status" value="1"/>
</dbReference>
<dbReference type="HAMAP" id="MF_00082">
    <property type="entry name" value="ArgB"/>
    <property type="match status" value="1"/>
</dbReference>
<dbReference type="InterPro" id="IPR036393">
    <property type="entry name" value="AceGlu_kinase-like_sf"/>
</dbReference>
<dbReference type="InterPro" id="IPR004662">
    <property type="entry name" value="AcgluKinase_fam"/>
</dbReference>
<dbReference type="InterPro" id="IPR037528">
    <property type="entry name" value="ArgB"/>
</dbReference>
<dbReference type="InterPro" id="IPR001048">
    <property type="entry name" value="Asp/Glu/Uridylate_kinase"/>
</dbReference>
<dbReference type="NCBIfam" id="TIGR00761">
    <property type="entry name" value="argB"/>
    <property type="match status" value="1"/>
</dbReference>
<dbReference type="PANTHER" id="PTHR23342">
    <property type="entry name" value="N-ACETYLGLUTAMATE SYNTHASE"/>
    <property type="match status" value="1"/>
</dbReference>
<dbReference type="PANTHER" id="PTHR23342:SF0">
    <property type="entry name" value="N-ACETYLGLUTAMATE SYNTHASE, MITOCHONDRIAL"/>
    <property type="match status" value="1"/>
</dbReference>
<dbReference type="Pfam" id="PF00696">
    <property type="entry name" value="AA_kinase"/>
    <property type="match status" value="1"/>
</dbReference>
<dbReference type="PIRSF" id="PIRSF000728">
    <property type="entry name" value="NAGK"/>
    <property type="match status" value="1"/>
</dbReference>
<dbReference type="SUPFAM" id="SSF53633">
    <property type="entry name" value="Carbamate kinase-like"/>
    <property type="match status" value="1"/>
</dbReference>